<protein>
    <recommendedName>
        <fullName evidence="1">Protein RecA</fullName>
    </recommendedName>
    <alternativeName>
        <fullName evidence="1">Recombinase A</fullName>
    </alternativeName>
</protein>
<feature type="chain" id="PRO_0000122648" description="Protein RecA">
    <location>
        <begin position="1"/>
        <end position="343"/>
    </location>
</feature>
<feature type="binding site" evidence="1">
    <location>
        <begin position="64"/>
        <end position="71"/>
    </location>
    <ligand>
        <name>ATP</name>
        <dbReference type="ChEBI" id="CHEBI:30616"/>
    </ligand>
</feature>
<accession>Q9APZ2</accession>
<accession>Q6HUV7</accession>
<accession>Q6KJ19</accession>
<proteinExistence type="inferred from homology"/>
<sequence>MSDRQAALDMALKQIEKQFGKGSIMKLGEQAERKVSTVSSGSLALDVALGVGGYPRGRIIEIYGPESSGKTTVSLHAIAEVQRQGGQAAFIDAEHAMDPVYAQKLGVNIDELLLSQPDTGEQGLEIAEALVRSGAVDIIVIDSVAALVPKAEIEGDMGDSHVGLQARLMSQALRKLSGAINKSKTIAIFINQIREKVGVMFGNPETTPGGRALKFYSTVRLEVRRAEQLKQGNDIVGNKTKVKVVKNKVAPPFRVAEVDIMYGEGISREGEILDMASELDIVQKSGAWYSYNEERLGQGRENSKQFLKENTDLREEIAFFIREHHGISEDSGAEGMEDPNLLD</sequence>
<comment type="function">
    <text evidence="1">Can catalyze the hydrolysis of ATP in the presence of single-stranded DNA, the ATP-dependent uptake of single-stranded DNA by duplex DNA, and the ATP-dependent hybridization of homologous single-stranded DNAs. It interacts with LexA causing its activation and leading to its autocatalytic cleavage.</text>
</comment>
<comment type="subcellular location">
    <subcellularLocation>
        <location evidence="1">Cytoplasm</location>
    </subcellularLocation>
</comment>
<comment type="similarity">
    <text evidence="1">Belongs to the RecA family.</text>
</comment>
<comment type="caution">
    <text evidence="2">The gene coding for this protein seems to be defective in strain Ames ancestor where it is interrupted by an insertion sequence.</text>
</comment>
<organism>
    <name type="scientific">Bacillus anthracis</name>
    <dbReference type="NCBI Taxonomy" id="1392"/>
    <lineage>
        <taxon>Bacteria</taxon>
        <taxon>Bacillati</taxon>
        <taxon>Bacillota</taxon>
        <taxon>Bacilli</taxon>
        <taxon>Bacillales</taxon>
        <taxon>Bacillaceae</taxon>
        <taxon>Bacillus</taxon>
        <taxon>Bacillus cereus group</taxon>
    </lineage>
</organism>
<gene>
    <name evidence="1" type="primary">recA</name>
    <name type="ordered locus">BA_3915</name>
    <name type="ordered locus">GBAA_3915</name>
    <name type="ordered locus">BAS3629</name>
</gene>
<name>RECA_BACAN</name>
<keyword id="KW-0067">ATP-binding</keyword>
<keyword id="KW-0963">Cytoplasm</keyword>
<keyword id="KW-0227">DNA damage</keyword>
<keyword id="KW-0233">DNA recombination</keyword>
<keyword id="KW-0234">DNA repair</keyword>
<keyword id="KW-0238">DNA-binding</keyword>
<keyword id="KW-0547">Nucleotide-binding</keyword>
<keyword id="KW-1185">Reference proteome</keyword>
<keyword id="KW-0742">SOS response</keyword>
<dbReference type="EMBL" id="AF229167">
    <property type="protein sequence ID" value="AAK00736.1"/>
    <property type="molecule type" value="Genomic_DNA"/>
</dbReference>
<dbReference type="EMBL" id="AE016879">
    <property type="protein sequence ID" value="AAP27648.1"/>
    <property type="molecule type" value="Genomic_DNA"/>
</dbReference>
<dbReference type="EMBL" id="AE017334">
    <property type="status" value="NOT_ANNOTATED_CDS"/>
    <property type="molecule type" value="Genomic_DNA"/>
</dbReference>
<dbReference type="EMBL" id="AE017225">
    <property type="protein sequence ID" value="AAT55932.1"/>
    <property type="molecule type" value="Genomic_DNA"/>
</dbReference>
<dbReference type="RefSeq" id="NP_846162.1">
    <property type="nucleotide sequence ID" value="NC_003997.3"/>
</dbReference>
<dbReference type="RefSeq" id="WP_001283851.1">
    <property type="nucleotide sequence ID" value="NZ_JBGOGU010000001.1"/>
</dbReference>
<dbReference type="RefSeq" id="YP_029881.1">
    <property type="nucleotide sequence ID" value="NC_005945.1"/>
</dbReference>
<dbReference type="SMR" id="Q9APZ2"/>
<dbReference type="IntAct" id="Q9APZ2">
    <property type="interactions" value="1"/>
</dbReference>
<dbReference type="KEGG" id="ban:BA_3915"/>
<dbReference type="KEGG" id="bat:BAS3629"/>
<dbReference type="PATRIC" id="fig|198094.11.peg.3885"/>
<dbReference type="eggNOG" id="COG0468">
    <property type="taxonomic scope" value="Bacteria"/>
</dbReference>
<dbReference type="HOGENOM" id="CLU_040469_7_1_9"/>
<dbReference type="Proteomes" id="UP000000427">
    <property type="component" value="Chromosome"/>
</dbReference>
<dbReference type="Proteomes" id="UP000000594">
    <property type="component" value="Chromosome"/>
</dbReference>
<dbReference type="GO" id="GO:0005829">
    <property type="term" value="C:cytosol"/>
    <property type="evidence" value="ECO:0007669"/>
    <property type="project" value="TreeGrafter"/>
</dbReference>
<dbReference type="GO" id="GO:0005524">
    <property type="term" value="F:ATP binding"/>
    <property type="evidence" value="ECO:0007669"/>
    <property type="project" value="UniProtKB-UniRule"/>
</dbReference>
<dbReference type="GO" id="GO:0016887">
    <property type="term" value="F:ATP hydrolysis activity"/>
    <property type="evidence" value="ECO:0007669"/>
    <property type="project" value="InterPro"/>
</dbReference>
<dbReference type="GO" id="GO:0140664">
    <property type="term" value="F:ATP-dependent DNA damage sensor activity"/>
    <property type="evidence" value="ECO:0007669"/>
    <property type="project" value="InterPro"/>
</dbReference>
<dbReference type="GO" id="GO:0003684">
    <property type="term" value="F:damaged DNA binding"/>
    <property type="evidence" value="ECO:0007669"/>
    <property type="project" value="UniProtKB-UniRule"/>
</dbReference>
<dbReference type="GO" id="GO:0003697">
    <property type="term" value="F:single-stranded DNA binding"/>
    <property type="evidence" value="ECO:0007669"/>
    <property type="project" value="UniProtKB-UniRule"/>
</dbReference>
<dbReference type="GO" id="GO:0006310">
    <property type="term" value="P:DNA recombination"/>
    <property type="evidence" value="ECO:0007669"/>
    <property type="project" value="UniProtKB-UniRule"/>
</dbReference>
<dbReference type="GO" id="GO:0006281">
    <property type="term" value="P:DNA repair"/>
    <property type="evidence" value="ECO:0007669"/>
    <property type="project" value="UniProtKB-UniRule"/>
</dbReference>
<dbReference type="GO" id="GO:0009432">
    <property type="term" value="P:SOS response"/>
    <property type="evidence" value="ECO:0007669"/>
    <property type="project" value="UniProtKB-UniRule"/>
</dbReference>
<dbReference type="CDD" id="cd00983">
    <property type="entry name" value="RecA"/>
    <property type="match status" value="1"/>
</dbReference>
<dbReference type="FunFam" id="3.40.50.300:FF:000087">
    <property type="entry name" value="Recombinase RecA"/>
    <property type="match status" value="1"/>
</dbReference>
<dbReference type="Gene3D" id="3.40.50.300">
    <property type="entry name" value="P-loop containing nucleotide triphosphate hydrolases"/>
    <property type="match status" value="1"/>
</dbReference>
<dbReference type="HAMAP" id="MF_00268">
    <property type="entry name" value="RecA"/>
    <property type="match status" value="1"/>
</dbReference>
<dbReference type="InterPro" id="IPR003593">
    <property type="entry name" value="AAA+_ATPase"/>
</dbReference>
<dbReference type="InterPro" id="IPR013765">
    <property type="entry name" value="DNA_recomb/repair_RecA"/>
</dbReference>
<dbReference type="InterPro" id="IPR020584">
    <property type="entry name" value="DNA_recomb/repair_RecA_CS"/>
</dbReference>
<dbReference type="InterPro" id="IPR027417">
    <property type="entry name" value="P-loop_NTPase"/>
</dbReference>
<dbReference type="InterPro" id="IPR049261">
    <property type="entry name" value="RecA-like_C"/>
</dbReference>
<dbReference type="InterPro" id="IPR049428">
    <property type="entry name" value="RecA-like_N"/>
</dbReference>
<dbReference type="InterPro" id="IPR020588">
    <property type="entry name" value="RecA_ATP-bd"/>
</dbReference>
<dbReference type="InterPro" id="IPR023400">
    <property type="entry name" value="RecA_C_sf"/>
</dbReference>
<dbReference type="InterPro" id="IPR020587">
    <property type="entry name" value="RecA_monomer-monomer_interface"/>
</dbReference>
<dbReference type="NCBIfam" id="TIGR02012">
    <property type="entry name" value="tigrfam_recA"/>
    <property type="match status" value="1"/>
</dbReference>
<dbReference type="PANTHER" id="PTHR45900:SF1">
    <property type="entry name" value="MITOCHONDRIAL DNA REPAIR PROTEIN RECA HOMOLOG-RELATED"/>
    <property type="match status" value="1"/>
</dbReference>
<dbReference type="PANTHER" id="PTHR45900">
    <property type="entry name" value="RECA"/>
    <property type="match status" value="1"/>
</dbReference>
<dbReference type="Pfam" id="PF00154">
    <property type="entry name" value="RecA"/>
    <property type="match status" value="1"/>
</dbReference>
<dbReference type="Pfam" id="PF21096">
    <property type="entry name" value="RecA_C"/>
    <property type="match status" value="1"/>
</dbReference>
<dbReference type="PRINTS" id="PR00142">
    <property type="entry name" value="RECA"/>
</dbReference>
<dbReference type="SMART" id="SM00382">
    <property type="entry name" value="AAA"/>
    <property type="match status" value="1"/>
</dbReference>
<dbReference type="SUPFAM" id="SSF52540">
    <property type="entry name" value="P-loop containing nucleoside triphosphate hydrolases"/>
    <property type="match status" value="1"/>
</dbReference>
<dbReference type="SUPFAM" id="SSF54752">
    <property type="entry name" value="RecA protein, C-terminal domain"/>
    <property type="match status" value="1"/>
</dbReference>
<dbReference type="PROSITE" id="PS00321">
    <property type="entry name" value="RECA_1"/>
    <property type="match status" value="1"/>
</dbReference>
<dbReference type="PROSITE" id="PS50162">
    <property type="entry name" value="RECA_2"/>
    <property type="match status" value="1"/>
</dbReference>
<dbReference type="PROSITE" id="PS50163">
    <property type="entry name" value="RECA_3"/>
    <property type="match status" value="1"/>
</dbReference>
<reference key="1">
    <citation type="submission" date="2000-01" db="EMBL/GenBank/DDBJ databases">
        <title>Cloning of recA gene from Bacillus anthracis.</title>
        <authorList>
            <person name="Ko M."/>
            <person name="Kim J.C."/>
            <person name="Park C."/>
        </authorList>
    </citation>
    <scope>NUCLEOTIDE SEQUENCE [GENOMIC DNA]</scope>
    <source>
        <strain>Sterne</strain>
    </source>
</reference>
<reference key="2">
    <citation type="journal article" date="2003" name="Nature">
        <title>The genome sequence of Bacillus anthracis Ames and comparison to closely related bacteria.</title>
        <authorList>
            <person name="Read T.D."/>
            <person name="Peterson S.N."/>
            <person name="Tourasse N.J."/>
            <person name="Baillie L.W."/>
            <person name="Paulsen I.T."/>
            <person name="Nelson K.E."/>
            <person name="Tettelin H."/>
            <person name="Fouts D.E."/>
            <person name="Eisen J.A."/>
            <person name="Gill S.R."/>
            <person name="Holtzapple E.K."/>
            <person name="Okstad O.A."/>
            <person name="Helgason E."/>
            <person name="Rilstone J."/>
            <person name="Wu M."/>
            <person name="Kolonay J.F."/>
            <person name="Beanan M.J."/>
            <person name="Dodson R.J."/>
            <person name="Brinkac L.M."/>
            <person name="Gwinn M.L."/>
            <person name="DeBoy R.T."/>
            <person name="Madpu R."/>
            <person name="Daugherty S.C."/>
            <person name="Durkin A.S."/>
            <person name="Haft D.H."/>
            <person name="Nelson W.C."/>
            <person name="Peterson J.D."/>
            <person name="Pop M."/>
            <person name="Khouri H.M."/>
            <person name="Radune D."/>
            <person name="Benton J.L."/>
            <person name="Mahamoud Y."/>
            <person name="Jiang L."/>
            <person name="Hance I.R."/>
            <person name="Weidman J.F."/>
            <person name="Berry K.J."/>
            <person name="Plaut R.D."/>
            <person name="Wolf A.M."/>
            <person name="Watkins K.L."/>
            <person name="Nierman W.C."/>
            <person name="Hazen A."/>
            <person name="Cline R.T."/>
            <person name="Redmond C."/>
            <person name="Thwaite J.E."/>
            <person name="White O."/>
            <person name="Salzberg S.L."/>
            <person name="Thomason B."/>
            <person name="Friedlander A.M."/>
            <person name="Koehler T.M."/>
            <person name="Hanna P.C."/>
            <person name="Kolstoe A.-B."/>
            <person name="Fraser C.M."/>
        </authorList>
    </citation>
    <scope>NUCLEOTIDE SEQUENCE [LARGE SCALE GENOMIC DNA]</scope>
    <source>
        <strain>Ames / isolate Porton</strain>
    </source>
</reference>
<reference key="3">
    <citation type="journal article" date="2009" name="J. Bacteriol.">
        <title>The complete genome sequence of Bacillus anthracis Ames 'Ancestor'.</title>
        <authorList>
            <person name="Ravel J."/>
            <person name="Jiang L."/>
            <person name="Stanley S.T."/>
            <person name="Wilson M.R."/>
            <person name="Decker R.S."/>
            <person name="Read T.D."/>
            <person name="Worsham P."/>
            <person name="Keim P.S."/>
            <person name="Salzberg S.L."/>
            <person name="Fraser-Liggett C.M."/>
            <person name="Rasko D.A."/>
        </authorList>
    </citation>
    <scope>NUCLEOTIDE SEQUENCE [LARGE SCALE GENOMIC DNA]</scope>
    <source>
        <strain>Ames ancestor</strain>
    </source>
</reference>
<reference key="4">
    <citation type="submission" date="2004-01" db="EMBL/GenBank/DDBJ databases">
        <title>Complete genome sequence of Bacillus anthracis Sterne.</title>
        <authorList>
            <person name="Brettin T.S."/>
            <person name="Bruce D."/>
            <person name="Challacombe J.F."/>
            <person name="Gilna P."/>
            <person name="Han C."/>
            <person name="Hill K."/>
            <person name="Hitchcock P."/>
            <person name="Jackson P."/>
            <person name="Keim P."/>
            <person name="Longmire J."/>
            <person name="Lucas S."/>
            <person name="Okinaka R."/>
            <person name="Richardson P."/>
            <person name="Rubin E."/>
            <person name="Tice H."/>
        </authorList>
    </citation>
    <scope>NUCLEOTIDE SEQUENCE [LARGE SCALE GENOMIC DNA]</scope>
    <source>
        <strain>Sterne</strain>
    </source>
</reference>
<evidence type="ECO:0000255" key="1">
    <source>
        <dbReference type="HAMAP-Rule" id="MF_00268"/>
    </source>
</evidence>
<evidence type="ECO:0000305" key="2"/>